<protein>
    <recommendedName>
        <fullName>Cytochrome b</fullName>
    </recommendedName>
    <alternativeName>
        <fullName>Complex III subunit 3</fullName>
    </alternativeName>
    <alternativeName>
        <fullName>Complex III subunit III</fullName>
    </alternativeName>
    <alternativeName>
        <fullName>Cytochrome b-c1 complex subunit 3</fullName>
    </alternativeName>
    <alternativeName>
        <fullName>Ubiquinol-cytochrome-c reductase complex cytochrome b subunit</fullName>
    </alternativeName>
</protein>
<accession>Q9TEY7</accession>
<dbReference type="EMBL" id="AF159392">
    <property type="protein sequence ID" value="AAD49237.1"/>
    <property type="molecule type" value="Genomic_DNA"/>
</dbReference>
<dbReference type="SMR" id="Q9TEY7"/>
<dbReference type="GO" id="GO:0005743">
    <property type="term" value="C:mitochondrial inner membrane"/>
    <property type="evidence" value="ECO:0007669"/>
    <property type="project" value="UniProtKB-SubCell"/>
</dbReference>
<dbReference type="GO" id="GO:0045275">
    <property type="term" value="C:respiratory chain complex III"/>
    <property type="evidence" value="ECO:0007669"/>
    <property type="project" value="InterPro"/>
</dbReference>
<dbReference type="GO" id="GO:0046872">
    <property type="term" value="F:metal ion binding"/>
    <property type="evidence" value="ECO:0007669"/>
    <property type="project" value="UniProtKB-KW"/>
</dbReference>
<dbReference type="GO" id="GO:0008121">
    <property type="term" value="F:ubiquinol-cytochrome-c reductase activity"/>
    <property type="evidence" value="ECO:0007669"/>
    <property type="project" value="InterPro"/>
</dbReference>
<dbReference type="GO" id="GO:0006122">
    <property type="term" value="P:mitochondrial electron transport, ubiquinol to cytochrome c"/>
    <property type="evidence" value="ECO:0007669"/>
    <property type="project" value="TreeGrafter"/>
</dbReference>
<dbReference type="CDD" id="cd00290">
    <property type="entry name" value="cytochrome_b_C"/>
    <property type="match status" value="1"/>
</dbReference>
<dbReference type="CDD" id="cd00284">
    <property type="entry name" value="Cytochrome_b_N"/>
    <property type="match status" value="1"/>
</dbReference>
<dbReference type="FunFam" id="1.20.810.10:FF:000002">
    <property type="entry name" value="Cytochrome b"/>
    <property type="match status" value="1"/>
</dbReference>
<dbReference type="Gene3D" id="1.20.810.10">
    <property type="entry name" value="Cytochrome Bc1 Complex, Chain C"/>
    <property type="match status" value="1"/>
</dbReference>
<dbReference type="InterPro" id="IPR005798">
    <property type="entry name" value="Cyt_b/b6_C"/>
</dbReference>
<dbReference type="InterPro" id="IPR036150">
    <property type="entry name" value="Cyt_b/b6_C_sf"/>
</dbReference>
<dbReference type="InterPro" id="IPR005797">
    <property type="entry name" value="Cyt_b/b6_N"/>
</dbReference>
<dbReference type="InterPro" id="IPR027387">
    <property type="entry name" value="Cytb/b6-like_sf"/>
</dbReference>
<dbReference type="InterPro" id="IPR030689">
    <property type="entry name" value="Cytochrome_b"/>
</dbReference>
<dbReference type="InterPro" id="IPR048260">
    <property type="entry name" value="Cytochrome_b_C_euk/bac"/>
</dbReference>
<dbReference type="InterPro" id="IPR048259">
    <property type="entry name" value="Cytochrome_b_N_euk/bac"/>
</dbReference>
<dbReference type="InterPro" id="IPR016174">
    <property type="entry name" value="Di-haem_cyt_TM"/>
</dbReference>
<dbReference type="PANTHER" id="PTHR19271">
    <property type="entry name" value="CYTOCHROME B"/>
    <property type="match status" value="1"/>
</dbReference>
<dbReference type="PANTHER" id="PTHR19271:SF16">
    <property type="entry name" value="CYTOCHROME B"/>
    <property type="match status" value="1"/>
</dbReference>
<dbReference type="Pfam" id="PF00032">
    <property type="entry name" value="Cytochrom_B_C"/>
    <property type="match status" value="1"/>
</dbReference>
<dbReference type="Pfam" id="PF00033">
    <property type="entry name" value="Cytochrome_B"/>
    <property type="match status" value="1"/>
</dbReference>
<dbReference type="PIRSF" id="PIRSF038885">
    <property type="entry name" value="COB"/>
    <property type="match status" value="1"/>
</dbReference>
<dbReference type="SUPFAM" id="SSF81648">
    <property type="entry name" value="a domain/subunit of cytochrome bc1 complex (Ubiquinol-cytochrome c reductase)"/>
    <property type="match status" value="1"/>
</dbReference>
<dbReference type="SUPFAM" id="SSF81342">
    <property type="entry name" value="Transmembrane di-heme cytochromes"/>
    <property type="match status" value="1"/>
</dbReference>
<dbReference type="PROSITE" id="PS51003">
    <property type="entry name" value="CYTB_CTER"/>
    <property type="match status" value="1"/>
</dbReference>
<dbReference type="PROSITE" id="PS51002">
    <property type="entry name" value="CYTB_NTER"/>
    <property type="match status" value="1"/>
</dbReference>
<proteinExistence type="inferred from homology"/>
<reference key="1">
    <citation type="journal article" date="2000" name="Mol. Phylogenet. Evol.">
        <title>Molecular phylogeny of European muroid rodents based on complete cytochrome b sequences.</title>
        <authorList>
            <person name="Martin Y."/>
            <person name="Gerlach G."/>
            <person name="Schlotterer C."/>
            <person name="Meyer A."/>
        </authorList>
    </citation>
    <scope>NUCLEOTIDE SEQUENCE [GENOMIC DNA]</scope>
</reference>
<geneLocation type="mitochondrion"/>
<organism>
    <name type="scientific">Apodemus flavicollis</name>
    <name type="common">Yellow-necked field mouse</name>
    <dbReference type="NCBI Taxonomy" id="54292"/>
    <lineage>
        <taxon>Eukaryota</taxon>
        <taxon>Metazoa</taxon>
        <taxon>Chordata</taxon>
        <taxon>Craniata</taxon>
        <taxon>Vertebrata</taxon>
        <taxon>Euteleostomi</taxon>
        <taxon>Mammalia</taxon>
        <taxon>Eutheria</taxon>
        <taxon>Euarchontoglires</taxon>
        <taxon>Glires</taxon>
        <taxon>Rodentia</taxon>
        <taxon>Myomorpha</taxon>
        <taxon>Muroidea</taxon>
        <taxon>Muridae</taxon>
        <taxon>Murinae</taxon>
        <taxon>Apodemus</taxon>
        <taxon>Sylvaemus group</taxon>
    </lineage>
</organism>
<keyword id="KW-0249">Electron transport</keyword>
<keyword id="KW-0349">Heme</keyword>
<keyword id="KW-0408">Iron</keyword>
<keyword id="KW-0472">Membrane</keyword>
<keyword id="KW-0479">Metal-binding</keyword>
<keyword id="KW-0496">Mitochondrion</keyword>
<keyword id="KW-0999">Mitochondrion inner membrane</keyword>
<keyword id="KW-0679">Respiratory chain</keyword>
<keyword id="KW-0812">Transmembrane</keyword>
<keyword id="KW-1133">Transmembrane helix</keyword>
<keyword id="KW-0813">Transport</keyword>
<keyword id="KW-0830">Ubiquinone</keyword>
<feature type="chain" id="PRO_0000060608" description="Cytochrome b">
    <location>
        <begin position="1"/>
        <end position="381"/>
    </location>
</feature>
<feature type="transmembrane region" description="Helical" evidence="2">
    <location>
        <begin position="33"/>
        <end position="53"/>
    </location>
</feature>
<feature type="transmembrane region" description="Helical" evidence="2">
    <location>
        <begin position="77"/>
        <end position="98"/>
    </location>
</feature>
<feature type="transmembrane region" description="Helical" evidence="2">
    <location>
        <begin position="113"/>
        <end position="133"/>
    </location>
</feature>
<feature type="transmembrane region" description="Helical" evidence="2">
    <location>
        <begin position="178"/>
        <end position="198"/>
    </location>
</feature>
<feature type="transmembrane region" description="Helical" evidence="2">
    <location>
        <begin position="226"/>
        <end position="246"/>
    </location>
</feature>
<feature type="transmembrane region" description="Helical" evidence="2">
    <location>
        <begin position="288"/>
        <end position="308"/>
    </location>
</feature>
<feature type="transmembrane region" description="Helical" evidence="2">
    <location>
        <begin position="320"/>
        <end position="340"/>
    </location>
</feature>
<feature type="transmembrane region" description="Helical" evidence="2">
    <location>
        <begin position="347"/>
        <end position="367"/>
    </location>
</feature>
<feature type="binding site" description="axial binding residue" evidence="2">
    <location>
        <position position="83"/>
    </location>
    <ligand>
        <name>heme b</name>
        <dbReference type="ChEBI" id="CHEBI:60344"/>
        <label>b562</label>
    </ligand>
    <ligandPart>
        <name>Fe</name>
        <dbReference type="ChEBI" id="CHEBI:18248"/>
    </ligandPart>
</feature>
<feature type="binding site" description="axial binding residue" evidence="2">
    <location>
        <position position="97"/>
    </location>
    <ligand>
        <name>heme b</name>
        <dbReference type="ChEBI" id="CHEBI:60344"/>
        <label>b566</label>
    </ligand>
    <ligandPart>
        <name>Fe</name>
        <dbReference type="ChEBI" id="CHEBI:18248"/>
    </ligandPart>
</feature>
<feature type="binding site" description="axial binding residue" evidence="2">
    <location>
        <position position="182"/>
    </location>
    <ligand>
        <name>heme b</name>
        <dbReference type="ChEBI" id="CHEBI:60344"/>
        <label>b562</label>
    </ligand>
    <ligandPart>
        <name>Fe</name>
        <dbReference type="ChEBI" id="CHEBI:18248"/>
    </ligandPart>
</feature>
<feature type="binding site" description="axial binding residue" evidence="2">
    <location>
        <position position="196"/>
    </location>
    <ligand>
        <name>heme b</name>
        <dbReference type="ChEBI" id="CHEBI:60344"/>
        <label>b566</label>
    </ligand>
    <ligandPart>
        <name>Fe</name>
        <dbReference type="ChEBI" id="CHEBI:18248"/>
    </ligandPart>
</feature>
<feature type="binding site" evidence="2">
    <location>
        <position position="201"/>
    </location>
    <ligand>
        <name>a ubiquinone</name>
        <dbReference type="ChEBI" id="CHEBI:16389"/>
    </ligand>
</feature>
<comment type="function">
    <text evidence="2">Component of the ubiquinol-cytochrome c reductase complex (complex III or cytochrome b-c1 complex) that is part of the mitochondrial respiratory chain. The b-c1 complex mediates electron transfer from ubiquinol to cytochrome c. Contributes to the generation of a proton gradient across the mitochondrial membrane that is then used for ATP synthesis.</text>
</comment>
<comment type="cofactor">
    <cofactor evidence="2">
        <name>heme b</name>
        <dbReference type="ChEBI" id="CHEBI:60344"/>
    </cofactor>
    <text evidence="2">Binds 2 heme b groups non-covalently.</text>
</comment>
<comment type="subunit">
    <text evidence="2">The cytochrome bc1 complex contains 11 subunits: 3 respiratory subunits (MT-CYB, CYC1 and UQCRFS1), 2 core proteins (UQCRC1 and UQCRC2) and 6 low-molecular weight proteins (UQCRH/QCR6, UQCRB/QCR7, UQCRQ/QCR8, UQCR10/QCR9, UQCR11/QCR10 and a cleavage product of UQCRFS1). This cytochrome bc1 complex then forms a dimer.</text>
</comment>
<comment type="subcellular location">
    <subcellularLocation>
        <location evidence="2">Mitochondrion inner membrane</location>
        <topology evidence="2">Multi-pass membrane protein</topology>
    </subcellularLocation>
</comment>
<comment type="miscellaneous">
    <text evidence="1">Heme 1 (or BL or b562) is low-potential and absorbs at about 562 nm, and heme 2 (or BH or b566) is high-potential and absorbs at about 566 nm.</text>
</comment>
<comment type="similarity">
    <text evidence="3 4">Belongs to the cytochrome b family.</text>
</comment>
<comment type="caution">
    <text evidence="2">The full-length protein contains only eight transmembrane helices, not nine as predicted by bioinformatics tools.</text>
</comment>
<sequence length="381" mass="43169">MTNIRKTHPLLKIINHSFIDLPAPSNISSWWNFGSLLGICLMIQILTGLFLAMHYTSDTMTAFSSVTHICRDVNYGWLIRYLHANGASMFFICLFLHVGRGMYYGSYTFMETWNIGVILLFAVMATAFMGYVLPWGQMSFWGATVITNLLSAIPYIGTTLVEWIWGGFSVDKATLTRFFAFHFILPFIIAALVIVHLLFLHETGSNNPTGLNSEADKIPFHPYYTIKDILGVLMMVSFLMTLVLFFPDLLGDPDNYMPANPLNTPPHIKPEWYFLFAYAILRSIPNKLGGVLALILSILILALLPFLHTSKQRSLMFRPITQTLYWILVANLLVLTWIGGQPVEHPFIIIGQLASISYFSIILILMPISGIIEDKMLKWNL</sequence>
<name>CYB_APOFL</name>
<evidence type="ECO:0000250" key="1"/>
<evidence type="ECO:0000250" key="2">
    <source>
        <dbReference type="UniProtKB" id="P00157"/>
    </source>
</evidence>
<evidence type="ECO:0000255" key="3">
    <source>
        <dbReference type="PROSITE-ProRule" id="PRU00967"/>
    </source>
</evidence>
<evidence type="ECO:0000255" key="4">
    <source>
        <dbReference type="PROSITE-ProRule" id="PRU00968"/>
    </source>
</evidence>
<gene>
    <name type="primary">MT-CYB</name>
    <name type="synonym">COB</name>
    <name type="synonym">CYTB</name>
    <name type="synonym">MTCYB</name>
</gene>